<evidence type="ECO:0000255" key="1">
    <source>
        <dbReference type="HAMAP-Rule" id="MF_01209"/>
    </source>
</evidence>
<comment type="function">
    <text evidence="1">Small subunit of the glutamine-dependent carbamoyl phosphate synthetase (CPSase). CPSase catalyzes the formation of carbamoyl phosphate from the ammonia moiety of glutamine, carbonate, and phosphate donated by ATP, constituting the first step of 2 biosynthetic pathways, one leading to arginine and/or urea and the other to pyrimidine nucleotides. The small subunit (glutamine amidotransferase) binds and cleaves glutamine to supply the large subunit with the substrate ammonia.</text>
</comment>
<comment type="catalytic activity">
    <reaction evidence="1">
        <text>hydrogencarbonate + L-glutamine + 2 ATP + H2O = carbamoyl phosphate + L-glutamate + 2 ADP + phosphate + 2 H(+)</text>
        <dbReference type="Rhea" id="RHEA:18633"/>
        <dbReference type="ChEBI" id="CHEBI:15377"/>
        <dbReference type="ChEBI" id="CHEBI:15378"/>
        <dbReference type="ChEBI" id="CHEBI:17544"/>
        <dbReference type="ChEBI" id="CHEBI:29985"/>
        <dbReference type="ChEBI" id="CHEBI:30616"/>
        <dbReference type="ChEBI" id="CHEBI:43474"/>
        <dbReference type="ChEBI" id="CHEBI:58228"/>
        <dbReference type="ChEBI" id="CHEBI:58359"/>
        <dbReference type="ChEBI" id="CHEBI:456216"/>
        <dbReference type="EC" id="6.3.5.5"/>
    </reaction>
</comment>
<comment type="catalytic activity">
    <molecule>Carbamoyl phosphate synthase small chain</molecule>
    <reaction evidence="1">
        <text>L-glutamine + H2O = L-glutamate + NH4(+)</text>
        <dbReference type="Rhea" id="RHEA:15889"/>
        <dbReference type="ChEBI" id="CHEBI:15377"/>
        <dbReference type="ChEBI" id="CHEBI:28938"/>
        <dbReference type="ChEBI" id="CHEBI:29985"/>
        <dbReference type="ChEBI" id="CHEBI:58359"/>
    </reaction>
</comment>
<comment type="pathway">
    <text evidence="1">Amino-acid biosynthesis; L-arginine biosynthesis; carbamoyl phosphate from bicarbonate: step 1/1.</text>
</comment>
<comment type="pathway">
    <text evidence="1">Pyrimidine metabolism; UMP biosynthesis via de novo pathway; (S)-dihydroorotate from bicarbonate: step 1/3.</text>
</comment>
<comment type="subunit">
    <text evidence="1">Composed of two chains; the small (or glutamine) chain promotes the hydrolysis of glutamine to ammonia, which is used by the large (or ammonia) chain to synthesize carbamoyl phosphate. Tetramer of heterodimers (alpha,beta)4.</text>
</comment>
<comment type="similarity">
    <text evidence="1">Belongs to the CarA family.</text>
</comment>
<keyword id="KW-0028">Amino-acid biosynthesis</keyword>
<keyword id="KW-0055">Arginine biosynthesis</keyword>
<keyword id="KW-0067">ATP-binding</keyword>
<keyword id="KW-0315">Glutamine amidotransferase</keyword>
<keyword id="KW-0436">Ligase</keyword>
<keyword id="KW-0547">Nucleotide-binding</keyword>
<keyword id="KW-0665">Pyrimidine biosynthesis</keyword>
<keyword id="KW-1185">Reference proteome</keyword>
<accession>Q8RBK1</accession>
<feature type="chain" id="PRO_0000112342" description="Carbamoyl phosphate synthase small chain">
    <location>
        <begin position="1"/>
        <end position="356"/>
    </location>
</feature>
<feature type="domain" description="Glutamine amidotransferase type-1" evidence="1">
    <location>
        <begin position="163"/>
        <end position="350"/>
    </location>
</feature>
<feature type="region of interest" description="CPSase" evidence="1">
    <location>
        <begin position="1"/>
        <end position="160"/>
    </location>
</feature>
<feature type="active site" description="Nucleophile" evidence="1">
    <location>
        <position position="238"/>
    </location>
</feature>
<feature type="active site" evidence="1">
    <location>
        <position position="323"/>
    </location>
</feature>
<feature type="active site" evidence="1">
    <location>
        <position position="325"/>
    </location>
</feature>
<feature type="binding site" evidence="1">
    <location>
        <position position="45"/>
    </location>
    <ligand>
        <name>L-glutamine</name>
        <dbReference type="ChEBI" id="CHEBI:58359"/>
    </ligand>
</feature>
<feature type="binding site" evidence="1">
    <location>
        <position position="211"/>
    </location>
    <ligand>
        <name>L-glutamine</name>
        <dbReference type="ChEBI" id="CHEBI:58359"/>
    </ligand>
</feature>
<feature type="binding site" evidence="1">
    <location>
        <position position="213"/>
    </location>
    <ligand>
        <name>L-glutamine</name>
        <dbReference type="ChEBI" id="CHEBI:58359"/>
    </ligand>
</feature>
<feature type="binding site" evidence="1">
    <location>
        <position position="239"/>
    </location>
    <ligand>
        <name>L-glutamine</name>
        <dbReference type="ChEBI" id="CHEBI:58359"/>
    </ligand>
</feature>
<feature type="binding site" evidence="1">
    <location>
        <position position="242"/>
    </location>
    <ligand>
        <name>L-glutamine</name>
        <dbReference type="ChEBI" id="CHEBI:58359"/>
    </ligand>
</feature>
<feature type="binding site" evidence="1">
    <location>
        <position position="280"/>
    </location>
    <ligand>
        <name>L-glutamine</name>
        <dbReference type="ChEBI" id="CHEBI:58359"/>
    </ligand>
</feature>
<feature type="binding site" evidence="1">
    <location>
        <position position="282"/>
    </location>
    <ligand>
        <name>L-glutamine</name>
        <dbReference type="ChEBI" id="CHEBI:58359"/>
    </ligand>
</feature>
<feature type="binding site" evidence="1">
    <location>
        <position position="283"/>
    </location>
    <ligand>
        <name>L-glutamine</name>
        <dbReference type="ChEBI" id="CHEBI:58359"/>
    </ligand>
</feature>
<sequence length="356" mass="39976">MKGYLKLEDGSIFEGELISKNKKGYGEVVFTTGMTGYQEAITDPSYAGQIVVMTYPLIGNYGINKYDFQSEKPHIRGFVVREYCDKPSNFQSEESLLSYLDNHNIPVLSGIDTRALTKKLRENGTMRGIITYNPEDNIEFDQTNLLEEVSTKKPYRIAGIGPKLAFIDLGTKKGILKMLNSVGFDIYVFPYNASYDDVMQINPDAIFLSNGPGDPKDAVDAIELTKHFIGMKPVLGICLGHQIIALALGCNTVKMKFGHRGANQPVKDLLTNKDYITSQNHGYAVEEESIDKDKITVTHINLNDGTVEGIMHKFLPVFSVQYHPEACPGPRDSTDIFDKFMDIVMVYKRRFYFAEV</sequence>
<protein>
    <recommendedName>
        <fullName evidence="1">Carbamoyl phosphate synthase small chain</fullName>
        <ecNumber evidence="1">6.3.5.5</ecNumber>
    </recommendedName>
    <alternativeName>
        <fullName evidence="1">Carbamoyl phosphate synthetase glutamine chain</fullName>
    </alternativeName>
</protein>
<organism>
    <name type="scientific">Caldanaerobacter subterraneus subsp. tengcongensis (strain DSM 15242 / JCM 11007 / NBRC 100824 / MB4)</name>
    <name type="common">Thermoanaerobacter tengcongensis</name>
    <dbReference type="NCBI Taxonomy" id="273068"/>
    <lineage>
        <taxon>Bacteria</taxon>
        <taxon>Bacillati</taxon>
        <taxon>Bacillota</taxon>
        <taxon>Clostridia</taxon>
        <taxon>Thermoanaerobacterales</taxon>
        <taxon>Thermoanaerobacteraceae</taxon>
        <taxon>Caldanaerobacter</taxon>
    </lineage>
</organism>
<reference key="1">
    <citation type="journal article" date="2002" name="Genome Res.">
        <title>A complete sequence of the T. tengcongensis genome.</title>
        <authorList>
            <person name="Bao Q."/>
            <person name="Tian Y."/>
            <person name="Li W."/>
            <person name="Xu Z."/>
            <person name="Xuan Z."/>
            <person name="Hu S."/>
            <person name="Dong W."/>
            <person name="Yang J."/>
            <person name="Chen Y."/>
            <person name="Xue Y."/>
            <person name="Xu Y."/>
            <person name="Lai X."/>
            <person name="Huang L."/>
            <person name="Dong X."/>
            <person name="Ma Y."/>
            <person name="Ling L."/>
            <person name="Tan H."/>
            <person name="Chen R."/>
            <person name="Wang J."/>
            <person name="Yu J."/>
            <person name="Yang H."/>
        </authorList>
    </citation>
    <scope>NUCLEOTIDE SEQUENCE [LARGE SCALE GENOMIC DNA]</scope>
    <source>
        <strain>DSM 15242 / JCM 11007 / NBRC 100824 / MB4</strain>
    </source>
</reference>
<gene>
    <name evidence="1" type="primary">carA</name>
    <name type="ordered locus">TTE0815</name>
</gene>
<name>CARA_CALS4</name>
<dbReference type="EC" id="6.3.5.5" evidence="1"/>
<dbReference type="EMBL" id="AE008691">
    <property type="protein sequence ID" value="AAM24072.1"/>
    <property type="molecule type" value="Genomic_DNA"/>
</dbReference>
<dbReference type="RefSeq" id="WP_011025208.1">
    <property type="nucleotide sequence ID" value="NC_003869.1"/>
</dbReference>
<dbReference type="SMR" id="Q8RBK1"/>
<dbReference type="STRING" id="273068.TTE0815"/>
<dbReference type="MEROPS" id="C26.963"/>
<dbReference type="KEGG" id="tte:TTE0815"/>
<dbReference type="eggNOG" id="COG0505">
    <property type="taxonomic scope" value="Bacteria"/>
</dbReference>
<dbReference type="HOGENOM" id="CLU_035901_2_1_9"/>
<dbReference type="OrthoDB" id="9804328at2"/>
<dbReference type="UniPathway" id="UPA00068">
    <property type="reaction ID" value="UER00171"/>
</dbReference>
<dbReference type="UniPathway" id="UPA00070">
    <property type="reaction ID" value="UER00115"/>
</dbReference>
<dbReference type="Proteomes" id="UP000000555">
    <property type="component" value="Chromosome"/>
</dbReference>
<dbReference type="GO" id="GO:0005524">
    <property type="term" value="F:ATP binding"/>
    <property type="evidence" value="ECO:0007669"/>
    <property type="project" value="UniProtKB-UniRule"/>
</dbReference>
<dbReference type="GO" id="GO:0004088">
    <property type="term" value="F:carbamoyl-phosphate synthase (glutamine-hydrolyzing) activity"/>
    <property type="evidence" value="ECO:0007669"/>
    <property type="project" value="UniProtKB-UniRule"/>
</dbReference>
<dbReference type="GO" id="GO:0004359">
    <property type="term" value="F:glutaminase activity"/>
    <property type="evidence" value="ECO:0007669"/>
    <property type="project" value="RHEA"/>
</dbReference>
<dbReference type="GO" id="GO:0006207">
    <property type="term" value="P:'de novo' pyrimidine nucleobase biosynthetic process"/>
    <property type="evidence" value="ECO:0007669"/>
    <property type="project" value="InterPro"/>
</dbReference>
<dbReference type="GO" id="GO:0044205">
    <property type="term" value="P:'de novo' UMP biosynthetic process"/>
    <property type="evidence" value="ECO:0007669"/>
    <property type="project" value="UniProtKB-UniRule"/>
</dbReference>
<dbReference type="GO" id="GO:0006541">
    <property type="term" value="P:glutamine metabolic process"/>
    <property type="evidence" value="ECO:0007669"/>
    <property type="project" value="InterPro"/>
</dbReference>
<dbReference type="GO" id="GO:0006526">
    <property type="term" value="P:L-arginine biosynthetic process"/>
    <property type="evidence" value="ECO:0007669"/>
    <property type="project" value="UniProtKB-UniRule"/>
</dbReference>
<dbReference type="CDD" id="cd01744">
    <property type="entry name" value="GATase1_CPSase"/>
    <property type="match status" value="1"/>
</dbReference>
<dbReference type="FunFam" id="3.50.30.20:FF:000001">
    <property type="entry name" value="Carbamoyl-phosphate synthase small chain"/>
    <property type="match status" value="1"/>
</dbReference>
<dbReference type="Gene3D" id="3.40.50.880">
    <property type="match status" value="1"/>
</dbReference>
<dbReference type="Gene3D" id="3.50.30.20">
    <property type="entry name" value="Carbamoyl-phosphate synthase small subunit, N-terminal domain"/>
    <property type="match status" value="1"/>
</dbReference>
<dbReference type="HAMAP" id="MF_01209">
    <property type="entry name" value="CPSase_S_chain"/>
    <property type="match status" value="1"/>
</dbReference>
<dbReference type="InterPro" id="IPR050472">
    <property type="entry name" value="Anth_synth/Amidotransfase"/>
</dbReference>
<dbReference type="InterPro" id="IPR006274">
    <property type="entry name" value="CarbamoylP_synth_ssu"/>
</dbReference>
<dbReference type="InterPro" id="IPR002474">
    <property type="entry name" value="CarbamoylP_synth_ssu_N"/>
</dbReference>
<dbReference type="InterPro" id="IPR036480">
    <property type="entry name" value="CarbP_synth_ssu_N_sf"/>
</dbReference>
<dbReference type="InterPro" id="IPR029062">
    <property type="entry name" value="Class_I_gatase-like"/>
</dbReference>
<dbReference type="InterPro" id="IPR035686">
    <property type="entry name" value="CPSase_GATase1"/>
</dbReference>
<dbReference type="InterPro" id="IPR017926">
    <property type="entry name" value="GATASE"/>
</dbReference>
<dbReference type="NCBIfam" id="TIGR01368">
    <property type="entry name" value="CPSaseIIsmall"/>
    <property type="match status" value="1"/>
</dbReference>
<dbReference type="NCBIfam" id="NF009475">
    <property type="entry name" value="PRK12838.1"/>
    <property type="match status" value="1"/>
</dbReference>
<dbReference type="PANTHER" id="PTHR43418:SF7">
    <property type="entry name" value="CARBAMOYL-PHOSPHATE SYNTHASE SMALL CHAIN"/>
    <property type="match status" value="1"/>
</dbReference>
<dbReference type="PANTHER" id="PTHR43418">
    <property type="entry name" value="MULTIFUNCTIONAL TRYPTOPHAN BIOSYNTHESIS PROTEIN-RELATED"/>
    <property type="match status" value="1"/>
</dbReference>
<dbReference type="Pfam" id="PF00988">
    <property type="entry name" value="CPSase_sm_chain"/>
    <property type="match status" value="1"/>
</dbReference>
<dbReference type="Pfam" id="PF00117">
    <property type="entry name" value="GATase"/>
    <property type="match status" value="1"/>
</dbReference>
<dbReference type="PRINTS" id="PR00097">
    <property type="entry name" value="ANTSNTHASEII"/>
</dbReference>
<dbReference type="PRINTS" id="PR00099">
    <property type="entry name" value="CPSGATASE"/>
</dbReference>
<dbReference type="PRINTS" id="PR00096">
    <property type="entry name" value="GATASE"/>
</dbReference>
<dbReference type="SMART" id="SM01097">
    <property type="entry name" value="CPSase_sm_chain"/>
    <property type="match status" value="1"/>
</dbReference>
<dbReference type="SUPFAM" id="SSF52021">
    <property type="entry name" value="Carbamoyl phosphate synthetase, small subunit N-terminal domain"/>
    <property type="match status" value="1"/>
</dbReference>
<dbReference type="SUPFAM" id="SSF52317">
    <property type="entry name" value="Class I glutamine amidotransferase-like"/>
    <property type="match status" value="1"/>
</dbReference>
<dbReference type="PROSITE" id="PS51273">
    <property type="entry name" value="GATASE_TYPE_1"/>
    <property type="match status" value="1"/>
</dbReference>
<proteinExistence type="inferred from homology"/>